<keyword id="KW-0963">Cytoplasm</keyword>
<keyword id="KW-1015">Disulfide bond</keyword>
<keyword id="KW-0274">FAD</keyword>
<keyword id="KW-0285">Flavoprotein</keyword>
<keyword id="KW-0521">NADP</keyword>
<keyword id="KW-0560">Oxidoreductase</keyword>
<keyword id="KW-0676">Redox-active center</keyword>
<keyword id="KW-1185">Reference proteome</keyword>
<evidence type="ECO:0000250" key="1">
    <source>
        <dbReference type="UniProtKB" id="P29509"/>
    </source>
</evidence>
<evidence type="ECO:0000305" key="2"/>
<gene>
    <name type="primary">TRR1</name>
    <name type="ordered locus">CAGL0I01166g</name>
</gene>
<reference key="1">
    <citation type="journal article" date="2004" name="Nature">
        <title>Genome evolution in yeasts.</title>
        <authorList>
            <person name="Dujon B."/>
            <person name="Sherman D."/>
            <person name="Fischer G."/>
            <person name="Durrens P."/>
            <person name="Casaregola S."/>
            <person name="Lafontaine I."/>
            <person name="de Montigny J."/>
            <person name="Marck C."/>
            <person name="Neuveglise C."/>
            <person name="Talla E."/>
            <person name="Goffard N."/>
            <person name="Frangeul L."/>
            <person name="Aigle M."/>
            <person name="Anthouard V."/>
            <person name="Babour A."/>
            <person name="Barbe V."/>
            <person name="Barnay S."/>
            <person name="Blanchin S."/>
            <person name="Beckerich J.-M."/>
            <person name="Beyne E."/>
            <person name="Bleykasten C."/>
            <person name="Boisrame A."/>
            <person name="Boyer J."/>
            <person name="Cattolico L."/>
            <person name="Confanioleri F."/>
            <person name="de Daruvar A."/>
            <person name="Despons L."/>
            <person name="Fabre E."/>
            <person name="Fairhead C."/>
            <person name="Ferry-Dumazet H."/>
            <person name="Groppi A."/>
            <person name="Hantraye F."/>
            <person name="Hennequin C."/>
            <person name="Jauniaux N."/>
            <person name="Joyet P."/>
            <person name="Kachouri R."/>
            <person name="Kerrest A."/>
            <person name="Koszul R."/>
            <person name="Lemaire M."/>
            <person name="Lesur I."/>
            <person name="Ma L."/>
            <person name="Muller H."/>
            <person name="Nicaud J.-M."/>
            <person name="Nikolski M."/>
            <person name="Oztas S."/>
            <person name="Ozier-Kalogeropoulos O."/>
            <person name="Pellenz S."/>
            <person name="Potier S."/>
            <person name="Richard G.-F."/>
            <person name="Straub M.-L."/>
            <person name="Suleau A."/>
            <person name="Swennen D."/>
            <person name="Tekaia F."/>
            <person name="Wesolowski-Louvel M."/>
            <person name="Westhof E."/>
            <person name="Wirth B."/>
            <person name="Zeniou-Meyer M."/>
            <person name="Zivanovic Y."/>
            <person name="Bolotin-Fukuhara M."/>
            <person name="Thierry A."/>
            <person name="Bouchier C."/>
            <person name="Caudron B."/>
            <person name="Scarpelli C."/>
            <person name="Gaillardin C."/>
            <person name="Weissenbach J."/>
            <person name="Wincker P."/>
            <person name="Souciet J.-L."/>
        </authorList>
    </citation>
    <scope>NUCLEOTIDE SEQUENCE [LARGE SCALE GENOMIC DNA]</scope>
    <source>
        <strain>ATCC 2001 / BCRC 20586 / JCM 3761 / NBRC 0622 / NRRL Y-65 / CBS 138</strain>
    </source>
</reference>
<dbReference type="EC" id="1.8.1.9"/>
<dbReference type="EMBL" id="CR380955">
    <property type="protein sequence ID" value="CAG60242.1"/>
    <property type="molecule type" value="Genomic_DNA"/>
</dbReference>
<dbReference type="RefSeq" id="XP_447305.1">
    <property type="nucleotide sequence ID" value="XM_447305.1"/>
</dbReference>
<dbReference type="SMR" id="Q6FR39"/>
<dbReference type="FunCoup" id="Q6FR39">
    <property type="interactions" value="238"/>
</dbReference>
<dbReference type="STRING" id="284593.Q6FR39"/>
<dbReference type="GeneID" id="2889334"/>
<dbReference type="KEGG" id="cgr:2889334"/>
<dbReference type="eggNOG" id="KOG0404">
    <property type="taxonomic scope" value="Eukaryota"/>
</dbReference>
<dbReference type="HOGENOM" id="CLU_031864_5_1_1"/>
<dbReference type="InParanoid" id="Q6FR39"/>
<dbReference type="OMA" id="GPCHVLK"/>
<dbReference type="Proteomes" id="UP000002428">
    <property type="component" value="Chromosome I"/>
</dbReference>
<dbReference type="GO" id="GO:0005737">
    <property type="term" value="C:cytoplasm"/>
    <property type="evidence" value="ECO:0007669"/>
    <property type="project" value="UniProtKB-SubCell"/>
</dbReference>
<dbReference type="GO" id="GO:0004791">
    <property type="term" value="F:thioredoxin-disulfide reductase (NADPH) activity"/>
    <property type="evidence" value="ECO:0007669"/>
    <property type="project" value="UniProtKB-EC"/>
</dbReference>
<dbReference type="GO" id="GO:0019430">
    <property type="term" value="P:removal of superoxide radicals"/>
    <property type="evidence" value="ECO:0007669"/>
    <property type="project" value="InterPro"/>
</dbReference>
<dbReference type="FunFam" id="3.50.50.60:FF:000064">
    <property type="entry name" value="Thioredoxin reductase"/>
    <property type="match status" value="1"/>
</dbReference>
<dbReference type="Gene3D" id="3.50.50.60">
    <property type="entry name" value="FAD/NAD(P)-binding domain"/>
    <property type="match status" value="2"/>
</dbReference>
<dbReference type="InterPro" id="IPR036188">
    <property type="entry name" value="FAD/NAD-bd_sf"/>
</dbReference>
<dbReference type="InterPro" id="IPR023753">
    <property type="entry name" value="FAD/NAD-binding_dom"/>
</dbReference>
<dbReference type="InterPro" id="IPR050097">
    <property type="entry name" value="Ferredoxin-NADP_redctase_2"/>
</dbReference>
<dbReference type="InterPro" id="IPR008255">
    <property type="entry name" value="Pyr_nucl-diS_OxRdtase_2_AS"/>
</dbReference>
<dbReference type="InterPro" id="IPR005982">
    <property type="entry name" value="Thioredox_Rdtase"/>
</dbReference>
<dbReference type="NCBIfam" id="TIGR01292">
    <property type="entry name" value="TRX_reduct"/>
    <property type="match status" value="1"/>
</dbReference>
<dbReference type="PANTHER" id="PTHR48105">
    <property type="entry name" value="THIOREDOXIN REDUCTASE 1-RELATED-RELATED"/>
    <property type="match status" value="1"/>
</dbReference>
<dbReference type="Pfam" id="PF07992">
    <property type="entry name" value="Pyr_redox_2"/>
    <property type="match status" value="1"/>
</dbReference>
<dbReference type="PRINTS" id="PR00368">
    <property type="entry name" value="FADPNR"/>
</dbReference>
<dbReference type="PRINTS" id="PR00469">
    <property type="entry name" value="PNDRDTASEII"/>
</dbReference>
<dbReference type="SUPFAM" id="SSF51905">
    <property type="entry name" value="FAD/NAD(P)-binding domain"/>
    <property type="match status" value="1"/>
</dbReference>
<dbReference type="PROSITE" id="PS00573">
    <property type="entry name" value="PYRIDINE_REDOX_2"/>
    <property type="match status" value="1"/>
</dbReference>
<comment type="catalytic activity">
    <reaction>
        <text>[thioredoxin]-dithiol + NADP(+) = [thioredoxin]-disulfide + NADPH + H(+)</text>
        <dbReference type="Rhea" id="RHEA:20345"/>
        <dbReference type="Rhea" id="RHEA-COMP:10698"/>
        <dbReference type="Rhea" id="RHEA-COMP:10700"/>
        <dbReference type="ChEBI" id="CHEBI:15378"/>
        <dbReference type="ChEBI" id="CHEBI:29950"/>
        <dbReference type="ChEBI" id="CHEBI:50058"/>
        <dbReference type="ChEBI" id="CHEBI:57783"/>
        <dbReference type="ChEBI" id="CHEBI:58349"/>
        <dbReference type="EC" id="1.8.1.9"/>
    </reaction>
</comment>
<comment type="cofactor">
    <cofactor evidence="1">
        <name>FAD</name>
        <dbReference type="ChEBI" id="CHEBI:57692"/>
    </cofactor>
    <text evidence="1">Binds 1 FAD per subunit.</text>
</comment>
<comment type="subunit">
    <text evidence="1">Homodimer.</text>
</comment>
<comment type="subcellular location">
    <subcellularLocation>
        <location evidence="1">Cytoplasm</location>
    </subcellularLocation>
</comment>
<comment type="miscellaneous">
    <text>The active site is a redox-active disulfide bond.</text>
</comment>
<comment type="similarity">
    <text evidence="2">Belongs to the class-II pyridine nucleotide-disulfide oxidoreductase family.</text>
</comment>
<accession>Q6FR39</accession>
<organism>
    <name type="scientific">Candida glabrata (strain ATCC 2001 / BCRC 20586 / JCM 3761 / NBRC 0622 / NRRL Y-65 / CBS 138)</name>
    <name type="common">Yeast</name>
    <name type="synonym">Nakaseomyces glabratus</name>
    <dbReference type="NCBI Taxonomy" id="284593"/>
    <lineage>
        <taxon>Eukaryota</taxon>
        <taxon>Fungi</taxon>
        <taxon>Dikarya</taxon>
        <taxon>Ascomycota</taxon>
        <taxon>Saccharomycotina</taxon>
        <taxon>Saccharomycetes</taxon>
        <taxon>Saccharomycetales</taxon>
        <taxon>Saccharomycetaceae</taxon>
        <taxon>Nakaseomyces</taxon>
    </lineage>
</organism>
<proteinExistence type="inferred from homology"/>
<sequence length="319" mass="34386">MNHKKVVIIGSGPAAHTAAIYLARAEIKPTMYEGMLANGIAAGGQLTTTTEIENFPGFPDGMTGSELMDRMRAQSTKFGTEIITETIAKVDLSSRPFKLWTEFNEDGEPITTDAIVIATGASAKRLHIPGEETYWQQGISACAVCDGAVPIFRNKPLAVIGGGDSACEEAQFLTKYGSKVYLIVRKDHLRASTIMQRRAEQNDKIEILYNTVTLEAQGDGKLLNNLRIKNVKTNEETDLPVNGLFYAIGHTPATKIVEGQVETDETGYIKTIPGSSLTSVPGVFAAGDVQDSKYRQAITSAGSGCMAGLDAEKYLTELE</sequence>
<feature type="chain" id="PRO_0000166762" description="Thioredoxin reductase">
    <location>
        <begin position="1"/>
        <end position="319"/>
    </location>
</feature>
<feature type="binding site" evidence="1">
    <location>
        <begin position="11"/>
        <end position="14"/>
    </location>
    <ligand>
        <name>FAD</name>
        <dbReference type="ChEBI" id="CHEBI:57692"/>
    </ligand>
</feature>
<feature type="binding site" evidence="1">
    <location>
        <begin position="40"/>
        <end position="41"/>
    </location>
    <ligand>
        <name>FAD</name>
        <dbReference type="ChEBI" id="CHEBI:57692"/>
    </ligand>
</feature>
<feature type="binding site" evidence="1">
    <location>
        <position position="45"/>
    </location>
    <ligand>
        <name>FAD</name>
        <dbReference type="ChEBI" id="CHEBI:57692"/>
    </ligand>
</feature>
<feature type="binding site" evidence="1">
    <location>
        <position position="54"/>
    </location>
    <ligand>
        <name>FAD</name>
        <dbReference type="ChEBI" id="CHEBI:57692"/>
    </ligand>
</feature>
<feature type="binding site" evidence="1">
    <location>
        <position position="145"/>
    </location>
    <ligand>
        <name>FAD</name>
        <dbReference type="ChEBI" id="CHEBI:57692"/>
    </ligand>
</feature>
<feature type="binding site" evidence="1">
    <location>
        <position position="288"/>
    </location>
    <ligand>
        <name>FAD</name>
        <dbReference type="ChEBI" id="CHEBI:57692"/>
    </ligand>
</feature>
<feature type="binding site" evidence="1">
    <location>
        <begin position="295"/>
        <end position="297"/>
    </location>
    <ligand>
        <name>FAD</name>
        <dbReference type="ChEBI" id="CHEBI:57692"/>
    </ligand>
</feature>
<feature type="disulfide bond" description="Redox-active" evidence="1">
    <location>
        <begin position="142"/>
        <end position="145"/>
    </location>
</feature>
<protein>
    <recommendedName>
        <fullName>Thioredoxin reductase</fullName>
        <ecNumber>1.8.1.9</ecNumber>
    </recommendedName>
</protein>
<name>TRXB_CANGA</name>